<reference key="1">
    <citation type="journal article" date="2007" name="PLoS ONE">
        <title>A glimpse of streptococcal toxic shock syndrome from comparative genomics of S. suis 2 Chinese isolates.</title>
        <authorList>
            <person name="Chen C."/>
            <person name="Tang J."/>
            <person name="Dong W."/>
            <person name="Wang C."/>
            <person name="Feng Y."/>
            <person name="Wang J."/>
            <person name="Zheng F."/>
            <person name="Pan X."/>
            <person name="Liu D."/>
            <person name="Li M."/>
            <person name="Song Y."/>
            <person name="Zhu X."/>
            <person name="Sun H."/>
            <person name="Feng T."/>
            <person name="Guo Z."/>
            <person name="Ju A."/>
            <person name="Ge J."/>
            <person name="Dong Y."/>
            <person name="Sun W."/>
            <person name="Jiang Y."/>
            <person name="Wang J."/>
            <person name="Yan J."/>
            <person name="Yang H."/>
            <person name="Wang X."/>
            <person name="Gao G.F."/>
            <person name="Yang R."/>
            <person name="Wang J."/>
            <person name="Yu J."/>
        </authorList>
    </citation>
    <scope>NUCLEOTIDE SEQUENCE [LARGE SCALE GENOMIC DNA]</scope>
    <source>
        <strain>05ZYH33</strain>
    </source>
</reference>
<organism>
    <name type="scientific">Streptococcus suis (strain 05ZYH33)</name>
    <dbReference type="NCBI Taxonomy" id="391295"/>
    <lineage>
        <taxon>Bacteria</taxon>
        <taxon>Bacillati</taxon>
        <taxon>Bacillota</taxon>
        <taxon>Bacilli</taxon>
        <taxon>Lactobacillales</taxon>
        <taxon>Streptococcaceae</taxon>
        <taxon>Streptococcus</taxon>
    </lineage>
</organism>
<protein>
    <recommendedName>
        <fullName evidence="1">UPF0342 protein SSU05_1260</fullName>
    </recommendedName>
</protein>
<feature type="chain" id="PRO_0000296977" description="UPF0342 protein SSU05_1260">
    <location>
        <begin position="1"/>
        <end position="112"/>
    </location>
</feature>
<comment type="similarity">
    <text evidence="1">Belongs to the UPF0342 family.</text>
</comment>
<dbReference type="EMBL" id="CP000407">
    <property type="protein sequence ID" value="ABP90226.1"/>
    <property type="molecule type" value="Genomic_DNA"/>
</dbReference>
<dbReference type="SMR" id="A4VVT7"/>
<dbReference type="STRING" id="391295.SSU05_1260"/>
<dbReference type="KEGG" id="ssu:SSU05_1260"/>
<dbReference type="eggNOG" id="COG3679">
    <property type="taxonomic scope" value="Bacteria"/>
</dbReference>
<dbReference type="HOGENOM" id="CLU_140243_2_0_9"/>
<dbReference type="BioCyc" id="SSUI391295:GHI8-1311-MONOMER"/>
<dbReference type="Gene3D" id="1.20.1500.10">
    <property type="entry name" value="YheA/YmcA-like"/>
    <property type="match status" value="1"/>
</dbReference>
<dbReference type="HAMAP" id="MF_01526">
    <property type="entry name" value="UPF0342"/>
    <property type="match status" value="1"/>
</dbReference>
<dbReference type="InterPro" id="IPR010368">
    <property type="entry name" value="Com_YlbF"/>
</dbReference>
<dbReference type="InterPro" id="IPR023378">
    <property type="entry name" value="YheA/YmcA-like_dom_sf"/>
</dbReference>
<dbReference type="NCBIfam" id="NF010209">
    <property type="entry name" value="PRK13676.1-1"/>
    <property type="match status" value="1"/>
</dbReference>
<dbReference type="Pfam" id="PF06133">
    <property type="entry name" value="Com_YlbF"/>
    <property type="match status" value="1"/>
</dbReference>
<dbReference type="SUPFAM" id="SSF158622">
    <property type="entry name" value="YheA/YmcA-like"/>
    <property type="match status" value="1"/>
</dbReference>
<proteinExistence type="inferred from homology"/>
<accession>A4VVT7</accession>
<name>Y1260_STRSY</name>
<sequence length="112" mass="12826">MSTNIYDIANELERAIRNLPEYKAVEAVKVSVEGNSEAKEILESYISFQKEIQSKLQAGEIPTEADQKKMLDFNKKVQGNPLLTEYFSKQQQLGTYVADLERIIFKPLNELL</sequence>
<gene>
    <name type="ordered locus">SSU05_1260</name>
</gene>
<evidence type="ECO:0000255" key="1">
    <source>
        <dbReference type="HAMAP-Rule" id="MF_01526"/>
    </source>
</evidence>